<keyword id="KW-0150">Chloroplast</keyword>
<keyword id="KW-0378">Hydrolase</keyword>
<keyword id="KW-0576">Peroxisome</keyword>
<keyword id="KW-0934">Plastid</keyword>
<keyword id="KW-1185">Reference proteome</keyword>
<keyword id="KW-0809">Transit peptide</keyword>
<gene>
    <name evidence="9" type="primary">PGL3</name>
    <name evidence="8" type="synonym">EMB2024</name>
    <name evidence="12" type="ordered locus">At5g24400</name>
    <name evidence="13" type="ORF">K16H17.11</name>
</gene>
<feature type="transit peptide" description="Chloroplast" evidence="1">
    <location>
        <begin position="1"/>
        <end position="68"/>
    </location>
</feature>
<feature type="chain" id="PRO_0000288672" description="6-phosphogluconolactonase 3, chloroplastic">
    <location>
        <begin position="69"/>
        <end position="325"/>
    </location>
</feature>
<feature type="region of interest" description="Disordered" evidence="2">
    <location>
        <begin position="51"/>
        <end position="73"/>
    </location>
</feature>
<feature type="short sequence motif" description="Microbody targeting signal" evidence="7">
    <location>
        <begin position="323"/>
        <end position="325"/>
    </location>
</feature>
<feature type="mutagenesis site" description="Abolishes enzymatic activity." evidence="5">
    <original>D</original>
    <variation>A</variation>
    <location>
        <position position="150"/>
    </location>
</feature>
<feature type="mutagenesis site" description="Abolishes enzymatic activity; when associated with A-233." evidence="5">
    <original>D</original>
    <variation>A</variation>
    <location>
        <position position="231"/>
    </location>
</feature>
<feature type="mutagenesis site" description="Abolishes enzymatic activity; when associated with A-231." evidence="5">
    <original>H</original>
    <variation>A</variation>
    <location>
        <position position="233"/>
    </location>
</feature>
<feature type="mutagenesis site" description="Abolishes targeting to peroxisome." evidence="7">
    <original>K</original>
    <variation>L</variation>
    <location>
        <position position="324"/>
    </location>
</feature>
<feature type="sequence conflict" description="In Ref. 4; AAM63366." evidence="10" ref="4">
    <original>P</original>
    <variation>L</variation>
    <location>
        <position position="30"/>
    </location>
</feature>
<feature type="sequence conflict" description="In Ref. 4; AAM63366." evidence="10" ref="4">
    <original>Y</original>
    <variation>H</variation>
    <location>
        <position position="33"/>
    </location>
</feature>
<feature type="sequence conflict" description="In Ref. 4; AAM63366." evidence="10" ref="4">
    <original>VI</original>
    <variation>AV</variation>
    <location>
        <begin position="93"/>
        <end position="94"/>
    </location>
</feature>
<sequence>MASSSCFLRSILFSSPTNLRSNHHLPTFFPKNYLICSHSTSSRFESLSVSSIGTGSTKKSSDTRRKVKSMATTNIGKEEKKRVEIYDLEENLVIDLAKFTADLSDKFCKERGAFTVVVSGGSLIKSLRKLVESPYVDSIDWARWHFFWVDERVVPKNHDDSNYKLAYDSFLSKVPIPPGNVYAINEALSAEAAADDYETCLKHLVNTNILRVSESTGFPKFDLMLLGMGPDGHVASLFPGHGLCNESKKWVVSISDSPKPPSERITFTFPVINSSAHVALVVCGSGKAEAVEAALKKTGNVPPAGSVSAEDELVWFLDKPASSKL</sequence>
<evidence type="ECO:0000255" key="1"/>
<evidence type="ECO:0000256" key="2">
    <source>
        <dbReference type="SAM" id="MobiDB-lite"/>
    </source>
</evidence>
<evidence type="ECO:0000269" key="3">
    <source>
    </source>
</evidence>
<evidence type="ECO:0000269" key="4">
    <source>
    </source>
</evidence>
<evidence type="ECO:0000269" key="5">
    <source>
    </source>
</evidence>
<evidence type="ECO:0000269" key="6">
    <source>
    </source>
</evidence>
<evidence type="ECO:0000269" key="7">
    <source>
    </source>
</evidence>
<evidence type="ECO:0000303" key="8">
    <source>
    </source>
</evidence>
<evidence type="ECO:0000303" key="9">
    <source>
    </source>
</evidence>
<evidence type="ECO:0000305" key="10"/>
<evidence type="ECO:0000305" key="11">
    <source>
    </source>
</evidence>
<evidence type="ECO:0000312" key="12">
    <source>
        <dbReference type="Araport" id="AT5G24400"/>
    </source>
</evidence>
<evidence type="ECO:0000312" key="13">
    <source>
        <dbReference type="EMBL" id="BAB11233.1"/>
    </source>
</evidence>
<comment type="function">
    <text evidence="5 6">Catalyzes the hydrolysis of 6-phosphogluconolactone to 6-phosphogluconate (PubMed:19457984). Involved in the regulation of cellular redox state; enzymatic activity is required for this function (PubMed:19457984). Required for sugar-dependent expression of nitrate assimilation genes in the nucleus of root cells (PubMed:23621281).</text>
</comment>
<comment type="catalytic activity">
    <reaction evidence="5">
        <text>6-phospho-D-glucono-1,5-lactone + H2O = 6-phospho-D-gluconate + H(+)</text>
        <dbReference type="Rhea" id="RHEA:12556"/>
        <dbReference type="ChEBI" id="CHEBI:15377"/>
        <dbReference type="ChEBI" id="CHEBI:15378"/>
        <dbReference type="ChEBI" id="CHEBI:57955"/>
        <dbReference type="ChEBI" id="CHEBI:58759"/>
        <dbReference type="EC" id="3.1.1.31"/>
    </reaction>
</comment>
<comment type="pathway">
    <text evidence="10">Carbohydrate degradation; pentose phosphate pathway; D-ribulose 5-phosphate from D-glucose 6-phosphate (oxidative stage): step 2/3.</text>
</comment>
<comment type="subunit">
    <text evidence="7">Interacts with TRXM2.</text>
</comment>
<comment type="subcellular location">
    <subcellularLocation>
        <location evidence="5 6 7 11">Plastid</location>
        <location evidence="5 6 7 11">Chloroplast</location>
    </subcellularLocation>
    <subcellularLocation>
        <location evidence="4 7">Peroxisome</location>
    </subcellularLocation>
</comment>
<comment type="tissue specificity">
    <text evidence="6">Expressed in roots, leaves and shoots.</text>
</comment>
<comment type="disruption phenotype">
    <text evidence="3 5 6">Embryonic lethality when homozygous (PubMed:15266054, PubMed:19457984, PubMed:23621281). Embryo development arrest at cotyledon stage (PubMed:15266054).</text>
</comment>
<comment type="miscellaneous">
    <text evidence="5">Plants silencing PGL3 exhibit reduced rosette size, constitutive expression of the pathogenesis-related genes PR1, PR2 and PR5, and enhanced resistance to Pseudomonas syringae pv. maculicola ES4326 and Hyaloperonospora arabidopsidis Noco2.</text>
</comment>
<comment type="similarity">
    <text evidence="10">Belongs to the glucosamine/galactosamine-6-phosphate isomerase family. 6-phosphogluconolactonase subfamily.</text>
</comment>
<comment type="sequence caution" evidence="10">
    <conflict type="erroneous initiation">
        <sequence resource="EMBL-CDS" id="BAB11233"/>
    </conflict>
    <text>Truncated N-terminus.</text>
</comment>
<organism>
    <name type="scientific">Arabidopsis thaliana</name>
    <name type="common">Mouse-ear cress</name>
    <dbReference type="NCBI Taxonomy" id="3702"/>
    <lineage>
        <taxon>Eukaryota</taxon>
        <taxon>Viridiplantae</taxon>
        <taxon>Streptophyta</taxon>
        <taxon>Embryophyta</taxon>
        <taxon>Tracheophyta</taxon>
        <taxon>Spermatophyta</taxon>
        <taxon>Magnoliopsida</taxon>
        <taxon>eudicotyledons</taxon>
        <taxon>Gunneridae</taxon>
        <taxon>Pentapetalae</taxon>
        <taxon>rosids</taxon>
        <taxon>malvids</taxon>
        <taxon>Brassicales</taxon>
        <taxon>Brassicaceae</taxon>
        <taxon>Camelineae</taxon>
        <taxon>Arabidopsis</taxon>
    </lineage>
</organism>
<proteinExistence type="evidence at protein level"/>
<name>6PGL3_ARATH</name>
<reference key="1">
    <citation type="journal article" date="1998" name="DNA Res.">
        <title>Structural analysis of Arabidopsis thaliana chromosome 5. VIII. Sequence features of the regions of 1,081,958 bp covered by seventeen physically assigned P1 and TAC clones.</title>
        <authorList>
            <person name="Asamizu E."/>
            <person name="Sato S."/>
            <person name="Kaneko T."/>
            <person name="Nakamura Y."/>
            <person name="Kotani H."/>
            <person name="Miyajima N."/>
            <person name="Tabata S."/>
        </authorList>
    </citation>
    <scope>NUCLEOTIDE SEQUENCE [LARGE SCALE GENOMIC DNA]</scope>
    <source>
        <strain>cv. Columbia</strain>
    </source>
</reference>
<reference key="2">
    <citation type="journal article" date="2017" name="Plant J.">
        <title>Araport11: a complete reannotation of the Arabidopsis thaliana reference genome.</title>
        <authorList>
            <person name="Cheng C.Y."/>
            <person name="Krishnakumar V."/>
            <person name="Chan A.P."/>
            <person name="Thibaud-Nissen F."/>
            <person name="Schobel S."/>
            <person name="Town C.D."/>
        </authorList>
    </citation>
    <scope>GENOME REANNOTATION</scope>
    <source>
        <strain>cv. Columbia</strain>
    </source>
</reference>
<reference key="3">
    <citation type="journal article" date="2003" name="Science">
        <title>Empirical analysis of transcriptional activity in the Arabidopsis genome.</title>
        <authorList>
            <person name="Yamada K."/>
            <person name="Lim J."/>
            <person name="Dale J.M."/>
            <person name="Chen H."/>
            <person name="Shinn P."/>
            <person name="Palm C.J."/>
            <person name="Southwick A.M."/>
            <person name="Wu H.C."/>
            <person name="Kim C.J."/>
            <person name="Nguyen M."/>
            <person name="Pham P.K."/>
            <person name="Cheuk R.F."/>
            <person name="Karlin-Newmann G."/>
            <person name="Liu S.X."/>
            <person name="Lam B."/>
            <person name="Sakano H."/>
            <person name="Wu T."/>
            <person name="Yu G."/>
            <person name="Miranda M."/>
            <person name="Quach H.L."/>
            <person name="Tripp M."/>
            <person name="Chang C.H."/>
            <person name="Lee J.M."/>
            <person name="Toriumi M.J."/>
            <person name="Chan M.M."/>
            <person name="Tang C.C."/>
            <person name="Onodera C.S."/>
            <person name="Deng J.M."/>
            <person name="Akiyama K."/>
            <person name="Ansari Y."/>
            <person name="Arakawa T."/>
            <person name="Banh J."/>
            <person name="Banno F."/>
            <person name="Bowser L."/>
            <person name="Brooks S.Y."/>
            <person name="Carninci P."/>
            <person name="Chao Q."/>
            <person name="Choy N."/>
            <person name="Enju A."/>
            <person name="Goldsmith A.D."/>
            <person name="Gurjal M."/>
            <person name="Hansen N.F."/>
            <person name="Hayashizaki Y."/>
            <person name="Johnson-Hopson C."/>
            <person name="Hsuan V.W."/>
            <person name="Iida K."/>
            <person name="Karnes M."/>
            <person name="Khan S."/>
            <person name="Koesema E."/>
            <person name="Ishida J."/>
            <person name="Jiang P.X."/>
            <person name="Jones T."/>
            <person name="Kawai J."/>
            <person name="Kamiya A."/>
            <person name="Meyers C."/>
            <person name="Nakajima M."/>
            <person name="Narusaka M."/>
            <person name="Seki M."/>
            <person name="Sakurai T."/>
            <person name="Satou M."/>
            <person name="Tamse R."/>
            <person name="Vaysberg M."/>
            <person name="Wallender E.K."/>
            <person name="Wong C."/>
            <person name="Yamamura Y."/>
            <person name="Yuan S."/>
            <person name="Shinozaki K."/>
            <person name="Davis R.W."/>
            <person name="Theologis A."/>
            <person name="Ecker J.R."/>
        </authorList>
    </citation>
    <scope>NUCLEOTIDE SEQUENCE [LARGE SCALE MRNA]</scope>
    <source>
        <strain>cv. Columbia</strain>
    </source>
</reference>
<reference key="4">
    <citation type="submission" date="2002-03" db="EMBL/GenBank/DDBJ databases">
        <title>Full-length cDNA from Arabidopsis thaliana.</title>
        <authorList>
            <person name="Brover V.V."/>
            <person name="Troukhan M.E."/>
            <person name="Alexandrov N.A."/>
            <person name="Lu Y.-P."/>
            <person name="Flavell R.B."/>
            <person name="Feldmann K.A."/>
        </authorList>
    </citation>
    <scope>NUCLEOTIDE SEQUENCE [LARGE SCALE MRNA]</scope>
</reference>
<reference key="5">
    <citation type="submission" date="1993-09" db="EMBL/GenBank/DDBJ databases">
        <title>The Arabidopsis thaliana transcribed genome: the GDR cDNA program.</title>
        <authorList>
            <person name="Desprez T."/>
            <person name="Amselem J."/>
            <person name="Chiapello H."/>
            <person name="Caboche M."/>
            <person name="Hoefte H."/>
        </authorList>
    </citation>
    <scope>NUCLEOTIDE SEQUENCE [LARGE SCALE MRNA] OF 242-325</scope>
    <source>
        <strain>cv. Columbia</strain>
        <tissue>Seedling</tissue>
    </source>
</reference>
<reference key="6">
    <citation type="journal article" date="2004" name="Plant Physiol.">
        <title>Identification of genes required for embryo development in Arabidopsis.</title>
        <authorList>
            <person name="Tzafrir I."/>
            <person name="Pena-Muralla R."/>
            <person name="Dickerman A."/>
            <person name="Berg M."/>
            <person name="Rogers R."/>
            <person name="Hutchens S."/>
            <person name="Sweeney T.C."/>
            <person name="McElver J."/>
            <person name="Aux G."/>
            <person name="Patton D."/>
            <person name="Meinke D."/>
        </authorList>
    </citation>
    <scope>DISRUPTION PHENOTYPE</scope>
</reference>
<reference key="7">
    <citation type="journal article" date="2007" name="Plant Cell">
        <title>Proteome analysis of Arabidopsis leaf peroxisomes reveals novel targeting peptides, metabolic pathways, and defense mechanisms.</title>
        <authorList>
            <person name="Reumann S."/>
            <person name="Babujee L."/>
            <person name="Ma C."/>
            <person name="Wienkoop S."/>
            <person name="Siemsen T."/>
            <person name="Antonicelli G.E."/>
            <person name="Rasche N."/>
            <person name="Lueder F."/>
            <person name="Weckwerth W."/>
            <person name="Jahn O."/>
        </authorList>
    </citation>
    <scope>SUBCELLULAR LOCATION</scope>
</reference>
<reference key="8">
    <citation type="journal article" date="2009" name="Plant Cell Physiol.">
        <title>Characterization of Arabidopsis 6-phosphogluconolactonase T-DNA insertion mutants reveals an essential role for the oxidative section of the plastidic pentose phosphate pathway in plant growth and development.</title>
        <authorList>
            <person name="Xiong Y."/>
            <person name="DeFraia C."/>
            <person name="Williams D."/>
            <person name="Zhang X."/>
            <person name="Mou Z."/>
        </authorList>
    </citation>
    <scope>FUNCTION</scope>
    <scope>CATALYTIC ACTIVITY</scope>
    <scope>SUBCELLULAR LOCATION</scope>
    <scope>GENE FAMILY</scope>
    <scope>NOMENCLATURE</scope>
    <scope>DISRUPTION PHENOTYPE</scope>
    <scope>MUTAGENESIS OF ASP-150; ASP-231 AND HIS-233</scope>
</reference>
<reference key="9">
    <citation type="journal article" date="2013" name="Plant J.">
        <title>Requirement for the plastidial oxidative pentose phosphate pathway for nitrate assimilation in Arabidopsis.</title>
        <authorList>
            <person name="Bussell J.D."/>
            <person name="Keech O."/>
            <person name="Fenske R."/>
            <person name="Smith S.M."/>
        </authorList>
    </citation>
    <scope>FUNCTION</scope>
    <scope>SUBCELLULAR LOCATION</scope>
    <scope>TISSUE SPECIFICITY</scope>
    <scope>DISRUPTION PHENOTYPE</scope>
</reference>
<reference key="10">
    <citation type="journal article" date="2014" name="Mol. Plant">
        <title>Dual-targeting of Arabidopsis 6-phosphogluconolactonase 3 (PGL3) to chloroplasts and peroxisomes involves interaction with Trx m2 in the cytosol.</title>
        <authorList>
            <person name="Hoelscher C."/>
            <person name="Meyer T."/>
            <person name="von Schaewen A."/>
        </authorList>
    </citation>
    <scope>INTERACTION WITH TRXM2</scope>
    <scope>SUBCELLULAR LOCATION</scope>
    <scope>MUTAGENESIS OF LYS-324</scope>
</reference>
<accession>Q84WW2</accession>
<accession>Q42135</accession>
<accession>Q8LD77</accession>
<accession>Q9FIN2</accession>
<protein>
    <recommendedName>
        <fullName evidence="10">6-phosphogluconolactonase 3, chloroplastic</fullName>
        <shortName evidence="10">6PGL3</shortName>
        <ecNumber evidence="5">3.1.1.31</ecNumber>
    </recommendedName>
    <alternativeName>
        <fullName evidence="8">Protein EMBRYO DEFECTIVE 2024</fullName>
    </alternativeName>
</protein>
<dbReference type="EC" id="3.1.1.31" evidence="5"/>
<dbReference type="EMBL" id="AB016884">
    <property type="protein sequence ID" value="BAB11233.1"/>
    <property type="status" value="ALT_INIT"/>
    <property type="molecule type" value="Genomic_DNA"/>
</dbReference>
<dbReference type="EMBL" id="CP002688">
    <property type="protein sequence ID" value="AED93307.1"/>
    <property type="molecule type" value="Genomic_DNA"/>
</dbReference>
<dbReference type="EMBL" id="BT001923">
    <property type="protein sequence ID" value="AAN71922.1"/>
    <property type="molecule type" value="mRNA"/>
</dbReference>
<dbReference type="EMBL" id="AY086161">
    <property type="protein sequence ID" value="AAM63366.1"/>
    <property type="molecule type" value="mRNA"/>
</dbReference>
<dbReference type="EMBL" id="Z26557">
    <property type="protein sequence ID" value="CAA81328.1"/>
    <property type="molecule type" value="mRNA"/>
</dbReference>
<dbReference type="RefSeq" id="NP_568445.1">
    <property type="nucleotide sequence ID" value="NM_122348.3"/>
</dbReference>
<dbReference type="SMR" id="Q84WW2"/>
<dbReference type="BioGRID" id="17786">
    <property type="interactions" value="1"/>
</dbReference>
<dbReference type="FunCoup" id="Q84WW2">
    <property type="interactions" value="4050"/>
</dbReference>
<dbReference type="STRING" id="3702.Q84WW2"/>
<dbReference type="iPTMnet" id="Q84WW2"/>
<dbReference type="PaxDb" id="3702-AT5G24400.1"/>
<dbReference type="ProteomicsDB" id="245161"/>
<dbReference type="EnsemblPlants" id="AT5G24400.1">
    <property type="protein sequence ID" value="AT5G24400.1"/>
    <property type="gene ID" value="AT5G24400"/>
</dbReference>
<dbReference type="GeneID" id="832511"/>
<dbReference type="Gramene" id="AT5G24400.1">
    <property type="protein sequence ID" value="AT5G24400.1"/>
    <property type="gene ID" value="AT5G24400"/>
</dbReference>
<dbReference type="KEGG" id="ath:AT5G24400"/>
<dbReference type="Araport" id="AT5G24400"/>
<dbReference type="TAIR" id="AT5G24400">
    <property type="gene designation" value="EMB2024"/>
</dbReference>
<dbReference type="eggNOG" id="KOG3147">
    <property type="taxonomic scope" value="Eukaryota"/>
</dbReference>
<dbReference type="HOGENOM" id="CLU_053947_0_0_1"/>
<dbReference type="InParanoid" id="Q84WW2"/>
<dbReference type="OMA" id="IAMSQST"/>
<dbReference type="PhylomeDB" id="Q84WW2"/>
<dbReference type="BioCyc" id="ARA:AT5G24400-MONOMER"/>
<dbReference type="BRENDA" id="3.1.1.31">
    <property type="organism ID" value="399"/>
</dbReference>
<dbReference type="UniPathway" id="UPA00115">
    <property type="reaction ID" value="UER00409"/>
</dbReference>
<dbReference type="PRO" id="PR:Q84WW2"/>
<dbReference type="Proteomes" id="UP000006548">
    <property type="component" value="Chromosome 5"/>
</dbReference>
<dbReference type="ExpressionAtlas" id="Q84WW2">
    <property type="expression patterns" value="baseline and differential"/>
</dbReference>
<dbReference type="GO" id="GO:0009507">
    <property type="term" value="C:chloroplast"/>
    <property type="evidence" value="ECO:0000314"/>
    <property type="project" value="TAIR"/>
</dbReference>
<dbReference type="GO" id="GO:0009570">
    <property type="term" value="C:chloroplast stroma"/>
    <property type="evidence" value="ECO:0007005"/>
    <property type="project" value="TAIR"/>
</dbReference>
<dbReference type="GO" id="GO:0005777">
    <property type="term" value="C:peroxisome"/>
    <property type="evidence" value="ECO:0000314"/>
    <property type="project" value="TAIR"/>
</dbReference>
<dbReference type="GO" id="GO:0009536">
    <property type="term" value="C:plastid"/>
    <property type="evidence" value="ECO:0000314"/>
    <property type="project" value="TAIR"/>
</dbReference>
<dbReference type="GO" id="GO:0017057">
    <property type="term" value="F:6-phosphogluconolactonase activity"/>
    <property type="evidence" value="ECO:0000314"/>
    <property type="project" value="TAIR"/>
</dbReference>
<dbReference type="GO" id="GO:0005975">
    <property type="term" value="P:carbohydrate metabolic process"/>
    <property type="evidence" value="ECO:0007669"/>
    <property type="project" value="InterPro"/>
</dbReference>
<dbReference type="GO" id="GO:0071461">
    <property type="term" value="P:cellular response to redox state"/>
    <property type="evidence" value="ECO:0000315"/>
    <property type="project" value="TAIR"/>
</dbReference>
<dbReference type="GO" id="GO:0042742">
    <property type="term" value="P:defense response to bacterium"/>
    <property type="evidence" value="ECO:0000315"/>
    <property type="project" value="TAIR"/>
</dbReference>
<dbReference type="GO" id="GO:0002229">
    <property type="term" value="P:defense response to oomycetes"/>
    <property type="evidence" value="ECO:0000315"/>
    <property type="project" value="TAIR"/>
</dbReference>
<dbReference type="GO" id="GO:0042128">
    <property type="term" value="P:nitrate assimilation"/>
    <property type="evidence" value="ECO:0000315"/>
    <property type="project" value="TAIR"/>
</dbReference>
<dbReference type="GO" id="GO:0006098">
    <property type="term" value="P:pentose-phosphate shunt"/>
    <property type="evidence" value="ECO:0007669"/>
    <property type="project" value="UniProtKB-UniPathway"/>
</dbReference>
<dbReference type="CDD" id="cd01400">
    <property type="entry name" value="6PGL"/>
    <property type="match status" value="1"/>
</dbReference>
<dbReference type="FunFam" id="3.40.50.1360:FF:000009">
    <property type="entry name" value="Probable 6-phosphogluconolactonase"/>
    <property type="match status" value="1"/>
</dbReference>
<dbReference type="Gene3D" id="3.40.50.1360">
    <property type="match status" value="1"/>
</dbReference>
<dbReference type="InterPro" id="IPR005900">
    <property type="entry name" value="6-phosphogluconolactonase_DevB"/>
</dbReference>
<dbReference type="InterPro" id="IPR006148">
    <property type="entry name" value="Glc/Gal-6P_isomerase"/>
</dbReference>
<dbReference type="InterPro" id="IPR037171">
    <property type="entry name" value="NagB/RpiA_transferase-like"/>
</dbReference>
<dbReference type="InterPro" id="IPR039104">
    <property type="entry name" value="PGLS"/>
</dbReference>
<dbReference type="NCBIfam" id="TIGR01198">
    <property type="entry name" value="pgl"/>
    <property type="match status" value="1"/>
</dbReference>
<dbReference type="PANTHER" id="PTHR11054">
    <property type="entry name" value="6-PHOSPHOGLUCONOLACTONASE"/>
    <property type="match status" value="1"/>
</dbReference>
<dbReference type="PANTHER" id="PTHR11054:SF22">
    <property type="entry name" value="6-PHOSPHOGLUCONOLACTONASE 3, CHLOROPLASTIC"/>
    <property type="match status" value="1"/>
</dbReference>
<dbReference type="Pfam" id="PF01182">
    <property type="entry name" value="Glucosamine_iso"/>
    <property type="match status" value="1"/>
</dbReference>
<dbReference type="SUPFAM" id="SSF100950">
    <property type="entry name" value="NagB/RpiA/CoA transferase-like"/>
    <property type="match status" value="1"/>
</dbReference>